<dbReference type="EC" id="6.1.1.7" evidence="1"/>
<dbReference type="EMBL" id="AJ965256">
    <property type="protein sequence ID" value="CAI82328.1"/>
    <property type="molecule type" value="Genomic_DNA"/>
</dbReference>
<dbReference type="RefSeq" id="WP_011308686.1">
    <property type="nucleotide sequence ID" value="NC_007356.1"/>
</dbReference>
<dbReference type="SMR" id="Q3ZWC3"/>
<dbReference type="KEGG" id="deh:cbdbA65"/>
<dbReference type="HOGENOM" id="CLU_004485_1_1_0"/>
<dbReference type="Proteomes" id="UP000000433">
    <property type="component" value="Chromosome"/>
</dbReference>
<dbReference type="GO" id="GO:0005829">
    <property type="term" value="C:cytosol"/>
    <property type="evidence" value="ECO:0007669"/>
    <property type="project" value="TreeGrafter"/>
</dbReference>
<dbReference type="GO" id="GO:0004813">
    <property type="term" value="F:alanine-tRNA ligase activity"/>
    <property type="evidence" value="ECO:0007669"/>
    <property type="project" value="UniProtKB-UniRule"/>
</dbReference>
<dbReference type="GO" id="GO:0002161">
    <property type="term" value="F:aminoacyl-tRNA deacylase activity"/>
    <property type="evidence" value="ECO:0007669"/>
    <property type="project" value="TreeGrafter"/>
</dbReference>
<dbReference type="GO" id="GO:0005524">
    <property type="term" value="F:ATP binding"/>
    <property type="evidence" value="ECO:0007669"/>
    <property type="project" value="UniProtKB-UniRule"/>
</dbReference>
<dbReference type="GO" id="GO:0000049">
    <property type="term" value="F:tRNA binding"/>
    <property type="evidence" value="ECO:0007669"/>
    <property type="project" value="UniProtKB-KW"/>
</dbReference>
<dbReference type="GO" id="GO:0008270">
    <property type="term" value="F:zinc ion binding"/>
    <property type="evidence" value="ECO:0007669"/>
    <property type="project" value="UniProtKB-UniRule"/>
</dbReference>
<dbReference type="GO" id="GO:0006419">
    <property type="term" value="P:alanyl-tRNA aminoacylation"/>
    <property type="evidence" value="ECO:0007669"/>
    <property type="project" value="UniProtKB-UniRule"/>
</dbReference>
<dbReference type="CDD" id="cd00673">
    <property type="entry name" value="AlaRS_core"/>
    <property type="match status" value="1"/>
</dbReference>
<dbReference type="FunFam" id="3.10.310.40:FF:000001">
    <property type="entry name" value="Alanine--tRNA ligase"/>
    <property type="match status" value="1"/>
</dbReference>
<dbReference type="FunFam" id="3.30.930.10:FF:000004">
    <property type="entry name" value="Alanine--tRNA ligase"/>
    <property type="match status" value="1"/>
</dbReference>
<dbReference type="FunFam" id="3.30.980.10:FF:000004">
    <property type="entry name" value="Alanine--tRNA ligase, cytoplasmic"/>
    <property type="match status" value="1"/>
</dbReference>
<dbReference type="Gene3D" id="2.40.30.130">
    <property type="match status" value="1"/>
</dbReference>
<dbReference type="Gene3D" id="3.10.310.40">
    <property type="match status" value="1"/>
</dbReference>
<dbReference type="Gene3D" id="3.30.54.20">
    <property type="match status" value="1"/>
</dbReference>
<dbReference type="Gene3D" id="3.30.930.10">
    <property type="entry name" value="Bira Bifunctional Protein, Domain 2"/>
    <property type="match status" value="1"/>
</dbReference>
<dbReference type="Gene3D" id="3.30.980.10">
    <property type="entry name" value="Threonyl-trna Synthetase, Chain A, domain 2"/>
    <property type="match status" value="1"/>
</dbReference>
<dbReference type="HAMAP" id="MF_00036_B">
    <property type="entry name" value="Ala_tRNA_synth_B"/>
    <property type="match status" value="1"/>
</dbReference>
<dbReference type="InterPro" id="IPR045864">
    <property type="entry name" value="aa-tRNA-synth_II/BPL/LPL"/>
</dbReference>
<dbReference type="InterPro" id="IPR002318">
    <property type="entry name" value="Ala-tRNA-lgiase_IIc"/>
</dbReference>
<dbReference type="InterPro" id="IPR018162">
    <property type="entry name" value="Ala-tRNA-ligase_IIc_anticod-bd"/>
</dbReference>
<dbReference type="InterPro" id="IPR018165">
    <property type="entry name" value="Ala-tRNA-synth_IIc_core"/>
</dbReference>
<dbReference type="InterPro" id="IPR018164">
    <property type="entry name" value="Ala-tRNA-synth_IIc_N"/>
</dbReference>
<dbReference type="InterPro" id="IPR050058">
    <property type="entry name" value="Ala-tRNA_ligase"/>
</dbReference>
<dbReference type="InterPro" id="IPR023033">
    <property type="entry name" value="Ala_tRNA_ligase_euk/bac"/>
</dbReference>
<dbReference type="InterPro" id="IPR003156">
    <property type="entry name" value="DHHA1_dom"/>
</dbReference>
<dbReference type="InterPro" id="IPR018163">
    <property type="entry name" value="Thr/Ala-tRNA-synth_IIc_edit"/>
</dbReference>
<dbReference type="InterPro" id="IPR009000">
    <property type="entry name" value="Transl_B-barrel_sf"/>
</dbReference>
<dbReference type="InterPro" id="IPR012947">
    <property type="entry name" value="tRNA_SAD"/>
</dbReference>
<dbReference type="NCBIfam" id="TIGR00344">
    <property type="entry name" value="alaS"/>
    <property type="match status" value="1"/>
</dbReference>
<dbReference type="PANTHER" id="PTHR11777:SF9">
    <property type="entry name" value="ALANINE--TRNA LIGASE, CYTOPLASMIC"/>
    <property type="match status" value="1"/>
</dbReference>
<dbReference type="PANTHER" id="PTHR11777">
    <property type="entry name" value="ALANYL-TRNA SYNTHETASE"/>
    <property type="match status" value="1"/>
</dbReference>
<dbReference type="Pfam" id="PF02272">
    <property type="entry name" value="DHHA1"/>
    <property type="match status" value="1"/>
</dbReference>
<dbReference type="Pfam" id="PF01411">
    <property type="entry name" value="tRNA-synt_2c"/>
    <property type="match status" value="1"/>
</dbReference>
<dbReference type="Pfam" id="PF07973">
    <property type="entry name" value="tRNA_SAD"/>
    <property type="match status" value="1"/>
</dbReference>
<dbReference type="PRINTS" id="PR00980">
    <property type="entry name" value="TRNASYNTHALA"/>
</dbReference>
<dbReference type="SMART" id="SM00863">
    <property type="entry name" value="tRNA_SAD"/>
    <property type="match status" value="1"/>
</dbReference>
<dbReference type="SUPFAM" id="SSF55681">
    <property type="entry name" value="Class II aaRS and biotin synthetases"/>
    <property type="match status" value="1"/>
</dbReference>
<dbReference type="SUPFAM" id="SSF101353">
    <property type="entry name" value="Putative anticodon-binding domain of alanyl-tRNA synthetase (AlaRS)"/>
    <property type="match status" value="1"/>
</dbReference>
<dbReference type="SUPFAM" id="SSF55186">
    <property type="entry name" value="ThrRS/AlaRS common domain"/>
    <property type="match status" value="1"/>
</dbReference>
<dbReference type="SUPFAM" id="SSF50447">
    <property type="entry name" value="Translation proteins"/>
    <property type="match status" value="1"/>
</dbReference>
<dbReference type="PROSITE" id="PS50860">
    <property type="entry name" value="AA_TRNA_LIGASE_II_ALA"/>
    <property type="match status" value="1"/>
</dbReference>
<comment type="function">
    <text evidence="1">Catalyzes the attachment of alanine to tRNA(Ala) in a two-step reaction: alanine is first activated by ATP to form Ala-AMP and then transferred to the acceptor end of tRNA(Ala). Also edits incorrectly charged Ser-tRNA(Ala) and Gly-tRNA(Ala) via its editing domain.</text>
</comment>
<comment type="catalytic activity">
    <reaction evidence="1">
        <text>tRNA(Ala) + L-alanine + ATP = L-alanyl-tRNA(Ala) + AMP + diphosphate</text>
        <dbReference type="Rhea" id="RHEA:12540"/>
        <dbReference type="Rhea" id="RHEA-COMP:9657"/>
        <dbReference type="Rhea" id="RHEA-COMP:9923"/>
        <dbReference type="ChEBI" id="CHEBI:30616"/>
        <dbReference type="ChEBI" id="CHEBI:33019"/>
        <dbReference type="ChEBI" id="CHEBI:57972"/>
        <dbReference type="ChEBI" id="CHEBI:78442"/>
        <dbReference type="ChEBI" id="CHEBI:78497"/>
        <dbReference type="ChEBI" id="CHEBI:456215"/>
        <dbReference type="EC" id="6.1.1.7"/>
    </reaction>
</comment>
<comment type="cofactor">
    <cofactor evidence="1">
        <name>Zn(2+)</name>
        <dbReference type="ChEBI" id="CHEBI:29105"/>
    </cofactor>
    <text evidence="1">Binds 1 zinc ion per subunit.</text>
</comment>
<comment type="subcellular location">
    <subcellularLocation>
        <location evidence="1">Cytoplasm</location>
    </subcellularLocation>
</comment>
<comment type="domain">
    <text evidence="1">Consists of three domains; the N-terminal catalytic domain, the editing domain and the C-terminal C-Ala domain. The editing domain removes incorrectly charged amino acids, while the C-Ala domain, along with tRNA(Ala), serves as a bridge to cooperatively bring together the editing and aminoacylation centers thus stimulating deacylation of misacylated tRNAs.</text>
</comment>
<comment type="similarity">
    <text evidence="1">Belongs to the class-II aminoacyl-tRNA synthetase family.</text>
</comment>
<organism>
    <name type="scientific">Dehalococcoides mccartyi (strain CBDB1)</name>
    <dbReference type="NCBI Taxonomy" id="255470"/>
    <lineage>
        <taxon>Bacteria</taxon>
        <taxon>Bacillati</taxon>
        <taxon>Chloroflexota</taxon>
        <taxon>Dehalococcoidia</taxon>
        <taxon>Dehalococcoidales</taxon>
        <taxon>Dehalococcoidaceae</taxon>
        <taxon>Dehalococcoides</taxon>
    </lineage>
</organism>
<gene>
    <name evidence="1" type="primary">alaS</name>
    <name type="ordered locus">cbdbA65</name>
</gene>
<feature type="chain" id="PRO_0000075104" description="Alanine--tRNA ligase">
    <location>
        <begin position="1"/>
        <end position="871"/>
    </location>
</feature>
<feature type="binding site" evidence="1">
    <location>
        <position position="561"/>
    </location>
    <ligand>
        <name>Zn(2+)</name>
        <dbReference type="ChEBI" id="CHEBI:29105"/>
    </ligand>
</feature>
<feature type="binding site" evidence="1">
    <location>
        <position position="565"/>
    </location>
    <ligand>
        <name>Zn(2+)</name>
        <dbReference type="ChEBI" id="CHEBI:29105"/>
    </ligand>
</feature>
<feature type="binding site" evidence="1">
    <location>
        <position position="665"/>
    </location>
    <ligand>
        <name>Zn(2+)</name>
        <dbReference type="ChEBI" id="CHEBI:29105"/>
    </ligand>
</feature>
<feature type="binding site" evidence="1">
    <location>
        <position position="669"/>
    </location>
    <ligand>
        <name>Zn(2+)</name>
        <dbReference type="ChEBI" id="CHEBI:29105"/>
    </ligand>
</feature>
<name>SYA_DEHMC</name>
<keyword id="KW-0030">Aminoacyl-tRNA synthetase</keyword>
<keyword id="KW-0067">ATP-binding</keyword>
<keyword id="KW-0963">Cytoplasm</keyword>
<keyword id="KW-0436">Ligase</keyword>
<keyword id="KW-0479">Metal-binding</keyword>
<keyword id="KW-0547">Nucleotide-binding</keyword>
<keyword id="KW-0648">Protein biosynthesis</keyword>
<keyword id="KW-0694">RNA-binding</keyword>
<keyword id="KW-0820">tRNA-binding</keyword>
<keyword id="KW-0862">Zinc</keyword>
<protein>
    <recommendedName>
        <fullName evidence="1">Alanine--tRNA ligase</fullName>
        <ecNumber evidence="1">6.1.1.7</ecNumber>
    </recommendedName>
    <alternativeName>
        <fullName evidence="1">Alanyl-tRNA synthetase</fullName>
        <shortName evidence="1">AlaRS</shortName>
    </alternativeName>
</protein>
<sequence>MFSSDELRENYLKFFEEKGHKRIVSSSLIPHNDPTLLLTTAGMVQFKPYYMGVAKPENPRMASCQKCFRTTDIESVGDASHLTMFEMLGNFSIGNYFKKEAIAWAWEYVTQRLNIPAERLWITVYLDDDEAIALWKEQGVPENRIVRLGAADNFWGPAGDSGPCGPCSEIHYDFGQETGCGKADCNPSCKCGRFCEIWNLVFVQFNQDKSGKRQNLPAPSIDTGMGLERLTILMQSKKNVYETDIFAPIVEKACLLSGRKYGCDAATDRALRIVSEHSRGITFLIADGVIPDKAGRGYVLRRLLRRAVLFGRRLGLERPFLVDMAGAVINRMSGIYPELKKRQTYVLEMIASEEARFSETLATGLELLEEIVRQTKGGRISGQDAFKLYDTYGFPVEMTTEIAAEKGLSVDLDGFESEMEIQRTKARSSRKFSFDAAATAEAVKNMRHAEKTCFVGYELAIQKSTIKDILTEGGTVDSIEEGDEASIVLDESPFYAEMGGQVGDTGEIITGGGRFEVKNTLHLPNGVFLHQGRVINGCLKISEAATAHINEERRRDIARNHTATHILQTALREVLGEQVQQRGSVVTPDRLRFDFSHLKPMSKDEMRRVEEFVNDKIRRNLPVYAEEMPYRHALEEGVTALFGEKYGDRVRVLRVGRPAVSAELCGGTHVTASGEIALFKIMSESSVGAGLRRIEAVTGREAEAFINLQQDSLSELSGMLESTAEESPRKLAELKEEIDTLKKAVQNLERQMSRGEAEELLSKAEDYKGVKLLVSRMTSVNADTLRETADFLRDKLGSGVIVLGTVTEDKPFFLCMVTPDLIAKGYHAGNIVKKLSQIAGGGGGGKPNMAQGGGRDKSKLDEALQAVKGMI</sequence>
<reference key="1">
    <citation type="journal article" date="2005" name="Nat. Biotechnol.">
        <title>Genome sequence of the chlorinated compound-respiring bacterium Dehalococcoides species strain CBDB1.</title>
        <authorList>
            <person name="Kube M."/>
            <person name="Beck A."/>
            <person name="Zinder S.H."/>
            <person name="Kuhl H."/>
            <person name="Reinhardt R."/>
            <person name="Adrian L."/>
        </authorList>
    </citation>
    <scope>NUCLEOTIDE SEQUENCE [LARGE SCALE GENOMIC DNA]</scope>
    <source>
        <strain>CBDB1</strain>
    </source>
</reference>
<accession>Q3ZWC3</accession>
<proteinExistence type="inferred from homology"/>
<evidence type="ECO:0000255" key="1">
    <source>
        <dbReference type="HAMAP-Rule" id="MF_00036"/>
    </source>
</evidence>